<evidence type="ECO:0000250" key="1"/>
<evidence type="ECO:0000250" key="2">
    <source>
        <dbReference type="UniProtKB" id="P00157"/>
    </source>
</evidence>
<evidence type="ECO:0000255" key="3">
    <source>
        <dbReference type="PROSITE-ProRule" id="PRU00967"/>
    </source>
</evidence>
<evidence type="ECO:0000255" key="4">
    <source>
        <dbReference type="PROSITE-ProRule" id="PRU00968"/>
    </source>
</evidence>
<evidence type="ECO:0000312" key="5">
    <source>
        <dbReference type="Proteomes" id="UP000002279"/>
    </source>
</evidence>
<accession>Q36461</accession>
<dbReference type="EMBL" id="X83427">
    <property type="protein sequence ID" value="CAA58454.1"/>
    <property type="molecule type" value="Genomic_DNA"/>
</dbReference>
<dbReference type="PIR" id="E58889">
    <property type="entry name" value="E58889"/>
</dbReference>
<dbReference type="RefSeq" id="NP_008055.1">
    <property type="nucleotide sequence ID" value="NC_000891.1"/>
</dbReference>
<dbReference type="SMR" id="Q36461"/>
<dbReference type="FunCoup" id="Q36461">
    <property type="interactions" value="290"/>
</dbReference>
<dbReference type="STRING" id="9258.ENSOANP00000024985"/>
<dbReference type="Ensembl" id="ENSOANT00000028483.1">
    <property type="protein sequence ID" value="ENSOANP00000024985.1"/>
    <property type="gene ID" value="ENSOANG00000019359.1"/>
</dbReference>
<dbReference type="GeneID" id="808703"/>
<dbReference type="KEGG" id="oaa:808703"/>
<dbReference type="CTD" id="4519"/>
<dbReference type="eggNOG" id="KOG4663">
    <property type="taxonomic scope" value="Eukaryota"/>
</dbReference>
<dbReference type="GeneTree" id="ENSGT00390000017948"/>
<dbReference type="HOGENOM" id="CLU_031114_3_0_1"/>
<dbReference type="InParanoid" id="Q36461"/>
<dbReference type="OMA" id="NISAWWN"/>
<dbReference type="OrthoDB" id="244at2759"/>
<dbReference type="TreeFam" id="TF353088"/>
<dbReference type="Proteomes" id="UP000002279">
    <property type="component" value="Mitochondrion"/>
</dbReference>
<dbReference type="Bgee" id="ENSOANG00000019359">
    <property type="expression patterns" value="Expressed in heart and 7 other cell types or tissues"/>
</dbReference>
<dbReference type="GO" id="GO:0016020">
    <property type="term" value="C:membrane"/>
    <property type="evidence" value="ECO:0000318"/>
    <property type="project" value="GO_Central"/>
</dbReference>
<dbReference type="GO" id="GO:0005743">
    <property type="term" value="C:mitochondrial inner membrane"/>
    <property type="evidence" value="ECO:0007669"/>
    <property type="project" value="UniProtKB-SubCell"/>
</dbReference>
<dbReference type="GO" id="GO:0045275">
    <property type="term" value="C:respiratory chain complex III"/>
    <property type="evidence" value="ECO:0000318"/>
    <property type="project" value="GO_Central"/>
</dbReference>
<dbReference type="GO" id="GO:0046872">
    <property type="term" value="F:metal ion binding"/>
    <property type="evidence" value="ECO:0007669"/>
    <property type="project" value="UniProtKB-KW"/>
</dbReference>
<dbReference type="GO" id="GO:0008121">
    <property type="term" value="F:ubiquinol-cytochrome-c reductase activity"/>
    <property type="evidence" value="ECO:0007669"/>
    <property type="project" value="InterPro"/>
</dbReference>
<dbReference type="GO" id="GO:0006122">
    <property type="term" value="P:mitochondrial electron transport, ubiquinol to cytochrome c"/>
    <property type="evidence" value="ECO:0000318"/>
    <property type="project" value="GO_Central"/>
</dbReference>
<dbReference type="CDD" id="cd00290">
    <property type="entry name" value="cytochrome_b_C"/>
    <property type="match status" value="1"/>
</dbReference>
<dbReference type="CDD" id="cd00284">
    <property type="entry name" value="Cytochrome_b_N"/>
    <property type="match status" value="1"/>
</dbReference>
<dbReference type="FunFam" id="1.20.810.10:FF:000002">
    <property type="entry name" value="Cytochrome b"/>
    <property type="match status" value="1"/>
</dbReference>
<dbReference type="Gene3D" id="1.20.810.10">
    <property type="entry name" value="Cytochrome Bc1 Complex, Chain C"/>
    <property type="match status" value="1"/>
</dbReference>
<dbReference type="InterPro" id="IPR005798">
    <property type="entry name" value="Cyt_b/b6_C"/>
</dbReference>
<dbReference type="InterPro" id="IPR036150">
    <property type="entry name" value="Cyt_b/b6_C_sf"/>
</dbReference>
<dbReference type="InterPro" id="IPR005797">
    <property type="entry name" value="Cyt_b/b6_N"/>
</dbReference>
<dbReference type="InterPro" id="IPR027387">
    <property type="entry name" value="Cytb/b6-like_sf"/>
</dbReference>
<dbReference type="InterPro" id="IPR030689">
    <property type="entry name" value="Cytochrome_b"/>
</dbReference>
<dbReference type="InterPro" id="IPR048260">
    <property type="entry name" value="Cytochrome_b_C_euk/bac"/>
</dbReference>
<dbReference type="InterPro" id="IPR048259">
    <property type="entry name" value="Cytochrome_b_N_euk/bac"/>
</dbReference>
<dbReference type="InterPro" id="IPR016174">
    <property type="entry name" value="Di-haem_cyt_TM"/>
</dbReference>
<dbReference type="PANTHER" id="PTHR19271">
    <property type="entry name" value="CYTOCHROME B"/>
    <property type="match status" value="1"/>
</dbReference>
<dbReference type="PANTHER" id="PTHR19271:SF16">
    <property type="entry name" value="CYTOCHROME B"/>
    <property type="match status" value="1"/>
</dbReference>
<dbReference type="Pfam" id="PF00032">
    <property type="entry name" value="Cytochrom_B_C"/>
    <property type="match status" value="1"/>
</dbReference>
<dbReference type="Pfam" id="PF00033">
    <property type="entry name" value="Cytochrome_B"/>
    <property type="match status" value="1"/>
</dbReference>
<dbReference type="PIRSF" id="PIRSF038885">
    <property type="entry name" value="COB"/>
    <property type="match status" value="1"/>
</dbReference>
<dbReference type="SUPFAM" id="SSF81648">
    <property type="entry name" value="a domain/subunit of cytochrome bc1 complex (Ubiquinol-cytochrome c reductase)"/>
    <property type="match status" value="1"/>
</dbReference>
<dbReference type="SUPFAM" id="SSF81342">
    <property type="entry name" value="Transmembrane di-heme cytochromes"/>
    <property type="match status" value="1"/>
</dbReference>
<dbReference type="PROSITE" id="PS51003">
    <property type="entry name" value="CYTB_CTER"/>
    <property type="match status" value="1"/>
</dbReference>
<dbReference type="PROSITE" id="PS51002">
    <property type="entry name" value="CYTB_NTER"/>
    <property type="match status" value="1"/>
</dbReference>
<gene>
    <name type="primary">MT-CYB</name>
    <name type="synonym">COB</name>
    <name type="synonym">CYTB</name>
    <name type="synonym">MTCYB</name>
</gene>
<proteinExistence type="inferred from homology"/>
<comment type="function">
    <text evidence="2">Component of the ubiquinol-cytochrome c reductase complex (complex III or cytochrome b-c1 complex) that is part of the mitochondrial respiratory chain. The b-c1 complex mediates electron transfer from ubiquinol to cytochrome c. Contributes to the generation of a proton gradient across the mitochondrial membrane that is then used for ATP synthesis.</text>
</comment>
<comment type="cofactor">
    <cofactor evidence="2">
        <name>heme b</name>
        <dbReference type="ChEBI" id="CHEBI:60344"/>
    </cofactor>
    <text evidence="2">Binds 2 heme b groups non-covalently.</text>
</comment>
<comment type="subunit">
    <text evidence="2">The cytochrome bc1 complex contains 11 subunits: 3 respiratory subunits (MT-CYB, CYC1 and UQCRFS1), 2 core proteins (UQCRC1 and UQCRC2) and 6 low-molecular weight proteins (UQCRH/QCR6, UQCRB/QCR7, UQCRQ/QCR8, UQCR10/QCR9, UQCR11/QCR10 and a cleavage product of UQCRFS1). This cytochrome bc1 complex then forms a dimer.</text>
</comment>
<comment type="subcellular location">
    <subcellularLocation>
        <location evidence="2">Mitochondrion inner membrane</location>
        <topology evidence="2">Multi-pass membrane protein</topology>
    </subcellularLocation>
</comment>
<comment type="miscellaneous">
    <text evidence="1">Heme 1 (or BL or b562) is low-potential and absorbs at about 562 nm, and heme 2 (or BH or b566) is high-potential and absorbs at about 566 nm.</text>
</comment>
<comment type="similarity">
    <text evidence="3 4">Belongs to the cytochrome b family.</text>
</comment>
<comment type="caution">
    <text evidence="2">The full-length protein contains only eight transmembrane helices, not nine as predicted by bioinformatics tools.</text>
</comment>
<name>CYB_ORNAN</name>
<reference key="1">
    <citation type="journal article" date="1996" name="J. Mol. Evol.">
        <title>The mitochondrial genome of a monotreme--the platypus (Ornithorhynchus anatinus).</title>
        <authorList>
            <person name="Janke A."/>
            <person name="Gemmell N.J."/>
            <person name="Feldmaier-Fuchs G."/>
            <person name="von Haeseler A."/>
            <person name="Paabo S."/>
        </authorList>
    </citation>
    <scope>NUCLEOTIDE SEQUENCE [LARGE SCALE GENOMIC DNA]</scope>
    <source>
        <strain evidence="5">Glennie</strain>
    </source>
</reference>
<protein>
    <recommendedName>
        <fullName>Cytochrome b</fullName>
    </recommendedName>
    <alternativeName>
        <fullName>Complex III subunit 3</fullName>
    </alternativeName>
    <alternativeName>
        <fullName>Complex III subunit III</fullName>
    </alternativeName>
    <alternativeName>
        <fullName>Cytochrome b-c1 complex subunit 3</fullName>
    </alternativeName>
    <alternativeName>
        <fullName>Ubiquinol-cytochrome-c reductase complex cytochrome b subunit</fullName>
    </alternativeName>
</protein>
<keyword id="KW-0249">Electron transport</keyword>
<keyword id="KW-0349">Heme</keyword>
<keyword id="KW-0408">Iron</keyword>
<keyword id="KW-0472">Membrane</keyword>
<keyword id="KW-0479">Metal-binding</keyword>
<keyword id="KW-0496">Mitochondrion</keyword>
<keyword id="KW-0999">Mitochondrion inner membrane</keyword>
<keyword id="KW-1185">Reference proteome</keyword>
<keyword id="KW-0679">Respiratory chain</keyword>
<keyword id="KW-0812">Transmembrane</keyword>
<keyword id="KW-1133">Transmembrane helix</keyword>
<keyword id="KW-0813">Transport</keyword>
<keyword id="KW-0830">Ubiquinone</keyword>
<feature type="chain" id="PRO_0000061324" description="Cytochrome b">
    <location>
        <begin position="1"/>
        <end position="379"/>
    </location>
</feature>
<feature type="transmembrane region" description="Helical" evidence="2">
    <location>
        <begin position="33"/>
        <end position="53"/>
    </location>
</feature>
<feature type="transmembrane region" description="Helical" evidence="2">
    <location>
        <begin position="77"/>
        <end position="98"/>
    </location>
</feature>
<feature type="transmembrane region" description="Helical" evidence="2">
    <location>
        <begin position="113"/>
        <end position="133"/>
    </location>
</feature>
<feature type="transmembrane region" description="Helical" evidence="2">
    <location>
        <begin position="178"/>
        <end position="198"/>
    </location>
</feature>
<feature type="transmembrane region" description="Helical" evidence="2">
    <location>
        <begin position="226"/>
        <end position="246"/>
    </location>
</feature>
<feature type="transmembrane region" description="Helical" evidence="2">
    <location>
        <begin position="288"/>
        <end position="308"/>
    </location>
</feature>
<feature type="transmembrane region" description="Helical" evidence="2">
    <location>
        <begin position="320"/>
        <end position="340"/>
    </location>
</feature>
<feature type="transmembrane region" description="Helical" evidence="2">
    <location>
        <begin position="347"/>
        <end position="367"/>
    </location>
</feature>
<feature type="binding site" description="axial binding residue" evidence="2">
    <location>
        <position position="83"/>
    </location>
    <ligand>
        <name>heme b</name>
        <dbReference type="ChEBI" id="CHEBI:60344"/>
        <label>b562</label>
    </ligand>
    <ligandPart>
        <name>Fe</name>
        <dbReference type="ChEBI" id="CHEBI:18248"/>
    </ligandPart>
</feature>
<feature type="binding site" description="axial binding residue" evidence="2">
    <location>
        <position position="97"/>
    </location>
    <ligand>
        <name>heme b</name>
        <dbReference type="ChEBI" id="CHEBI:60344"/>
        <label>b566</label>
    </ligand>
    <ligandPart>
        <name>Fe</name>
        <dbReference type="ChEBI" id="CHEBI:18248"/>
    </ligandPart>
</feature>
<feature type="binding site" description="axial binding residue" evidence="2">
    <location>
        <position position="182"/>
    </location>
    <ligand>
        <name>heme b</name>
        <dbReference type="ChEBI" id="CHEBI:60344"/>
        <label>b562</label>
    </ligand>
    <ligandPart>
        <name>Fe</name>
        <dbReference type="ChEBI" id="CHEBI:18248"/>
    </ligandPart>
</feature>
<feature type="binding site" description="axial binding residue" evidence="2">
    <location>
        <position position="196"/>
    </location>
    <ligand>
        <name>heme b</name>
        <dbReference type="ChEBI" id="CHEBI:60344"/>
        <label>b566</label>
    </ligand>
    <ligandPart>
        <name>Fe</name>
        <dbReference type="ChEBI" id="CHEBI:18248"/>
    </ligandPart>
</feature>
<feature type="binding site" evidence="2">
    <location>
        <position position="201"/>
    </location>
    <ligand>
        <name>a ubiquinone</name>
        <dbReference type="ChEBI" id="CHEBI:16389"/>
    </ligand>
</feature>
<organism>
    <name type="scientific">Ornithorhynchus anatinus</name>
    <name type="common">Duckbill platypus</name>
    <dbReference type="NCBI Taxonomy" id="9258"/>
    <lineage>
        <taxon>Eukaryota</taxon>
        <taxon>Metazoa</taxon>
        <taxon>Chordata</taxon>
        <taxon>Craniata</taxon>
        <taxon>Vertebrata</taxon>
        <taxon>Euteleostomi</taxon>
        <taxon>Mammalia</taxon>
        <taxon>Monotremata</taxon>
        <taxon>Ornithorhynchidae</taxon>
        <taxon>Ornithorhynchus</taxon>
    </lineage>
</organism>
<sequence>MNNLRKTHPLIKIVNHSFIDLPTPSNISSWWNFGSLLGLCLIIQILTGLFLAMHYTSDTSTAFSSVAHICRDVNYGWLIRYMHANGASLFFMCIFLHIGRGLYYGSYTQTETWNIGVVLLFTVMATAFVGYVLPWGQMSFWGATVITNLLSAIPYIGTTLVEWIWGGFSVDKATLTRFFAFHFILPFVIAALAVIHLLFLHETGSNNPSGLNSDPDKIPFHPYYSVKDLVGFFMTILVLLTLVLFTPDLLGDPDNYTPANPLSTPPHIKPEWYFLFAYAILRSIPNKLGGVLALVASILILILVPLLHTSYQRGLAFRPLTQMLFWILVTDLLTLTWIGGQPVEQPFIIIGQLASILYFLLITTLIPLTGLLENDLLKW</sequence>
<geneLocation type="mitochondrion"/>